<proteinExistence type="inferred from homology"/>
<name>SYG_MYCCT</name>
<reference key="1">
    <citation type="submission" date="2005-09" db="EMBL/GenBank/DDBJ databases">
        <authorList>
            <person name="Glass J.I."/>
            <person name="Lartigue C."/>
            <person name="Pfannkoch C."/>
            <person name="Baden-Tillson H."/>
            <person name="Smith H.O."/>
            <person name="Venter J.C."/>
            <person name="Roske K."/>
            <person name="Wise K.S."/>
            <person name="Calcutt M.J."/>
            <person name="Nelson W.C."/>
            <person name="Nierman W.C."/>
        </authorList>
    </citation>
    <scope>NUCLEOTIDE SEQUENCE [LARGE SCALE GENOMIC DNA]</scope>
    <source>
        <strain>California kid / ATCC 27343 / NCTC 10154</strain>
    </source>
</reference>
<sequence length="456" mass="53497">MSKSIEKMISHLKNQGFVFQGSEIYGGLANSWDYGPLGCEVKNKLKKVWWDFFVKKNPLNIGLDSSIILNSKVWKASGHIDGFNDPLIDCKNCKSRWRADKLIEEFDPSINTGIMSNLQLEEYINQNNIVCKKCQKKDFTQIRKFALMFKTNQGVLEDDSSIVYLRPETAQGIFINFKNVQRSMRKKLPFGIGQIGKSFRNEITPGNFIFRTREFEQMELEFFFDPNDSNDWFKYWLEQIEIFLTQKISLDKNNYKIRENLKDELAHYALKTSDIEFNFPFGWGELWGISHRSDFDLKVHQNLSKEDLTVLKEENNQKILANVIEPSVGVERLMLAIFWQAYTEEQLEENNSRIVLKLPYNLAPYQVAITPLSKQLNQNANQLFLELLKDFDAIYDETGNIGKRYRRQDAIGTPFVITYDFQTLEDQKVTIRYRDTMKQERILISQLKDFLNSQFN</sequence>
<keyword id="KW-0030">Aminoacyl-tRNA synthetase</keyword>
<keyword id="KW-0067">ATP-binding</keyword>
<keyword id="KW-0963">Cytoplasm</keyword>
<keyword id="KW-0436">Ligase</keyword>
<keyword id="KW-0547">Nucleotide-binding</keyword>
<keyword id="KW-0648">Protein biosynthesis</keyword>
<evidence type="ECO:0000255" key="1">
    <source>
        <dbReference type="HAMAP-Rule" id="MF_00253"/>
    </source>
</evidence>
<protein>
    <recommendedName>
        <fullName evidence="1">Glycine--tRNA ligase</fullName>
        <ecNumber evidence="1">6.1.1.14</ecNumber>
    </recommendedName>
    <alternativeName>
        <fullName evidence="1">Glycyl-tRNA synthetase</fullName>
        <shortName evidence="1">GlyRS</shortName>
    </alternativeName>
</protein>
<feature type="chain" id="PRO_1000047381" description="Glycine--tRNA ligase">
    <location>
        <begin position="1"/>
        <end position="456"/>
    </location>
</feature>
<feature type="binding site" evidence="1">
    <location>
        <position position="98"/>
    </location>
    <ligand>
        <name>substrate</name>
    </ligand>
</feature>
<feature type="binding site" evidence="1">
    <location>
        <position position="168"/>
    </location>
    <ligand>
        <name>substrate</name>
    </ligand>
</feature>
<feature type="binding site" evidence="1">
    <location>
        <begin position="200"/>
        <end position="202"/>
    </location>
    <ligand>
        <name>ATP</name>
        <dbReference type="ChEBI" id="CHEBI:30616"/>
    </ligand>
</feature>
<feature type="binding site" evidence="1">
    <location>
        <begin position="210"/>
        <end position="215"/>
    </location>
    <ligand>
        <name>ATP</name>
        <dbReference type="ChEBI" id="CHEBI:30616"/>
    </ligand>
</feature>
<feature type="binding site" evidence="1">
    <location>
        <begin position="215"/>
        <end position="219"/>
    </location>
    <ligand>
        <name>substrate</name>
    </ligand>
</feature>
<feature type="binding site" evidence="1">
    <location>
        <begin position="285"/>
        <end position="286"/>
    </location>
    <ligand>
        <name>ATP</name>
        <dbReference type="ChEBI" id="CHEBI:30616"/>
    </ligand>
</feature>
<feature type="binding site" evidence="1">
    <location>
        <begin position="325"/>
        <end position="329"/>
    </location>
    <ligand>
        <name>substrate</name>
    </ligand>
</feature>
<feature type="binding site" evidence="1">
    <location>
        <begin position="329"/>
        <end position="332"/>
    </location>
    <ligand>
        <name>ATP</name>
        <dbReference type="ChEBI" id="CHEBI:30616"/>
    </ligand>
</feature>
<comment type="function">
    <text evidence="1">Catalyzes the attachment of glycine to tRNA(Gly).</text>
</comment>
<comment type="catalytic activity">
    <reaction evidence="1">
        <text>tRNA(Gly) + glycine + ATP = glycyl-tRNA(Gly) + AMP + diphosphate</text>
        <dbReference type="Rhea" id="RHEA:16013"/>
        <dbReference type="Rhea" id="RHEA-COMP:9664"/>
        <dbReference type="Rhea" id="RHEA-COMP:9683"/>
        <dbReference type="ChEBI" id="CHEBI:30616"/>
        <dbReference type="ChEBI" id="CHEBI:33019"/>
        <dbReference type="ChEBI" id="CHEBI:57305"/>
        <dbReference type="ChEBI" id="CHEBI:78442"/>
        <dbReference type="ChEBI" id="CHEBI:78522"/>
        <dbReference type="ChEBI" id="CHEBI:456215"/>
        <dbReference type="EC" id="6.1.1.14"/>
    </reaction>
</comment>
<comment type="subunit">
    <text evidence="1">Homodimer.</text>
</comment>
<comment type="subcellular location">
    <subcellularLocation>
        <location evidence="1">Cytoplasm</location>
    </subcellularLocation>
</comment>
<comment type="similarity">
    <text evidence="1">Belongs to the class-II aminoacyl-tRNA synthetase family.</text>
</comment>
<gene>
    <name evidence="1" type="primary">glyQS</name>
    <name type="ordered locus">MCAP_0505</name>
</gene>
<accession>Q2SRY5</accession>
<dbReference type="EC" id="6.1.1.14" evidence="1"/>
<dbReference type="EMBL" id="CP000123">
    <property type="protein sequence ID" value="ABC01680.1"/>
    <property type="molecule type" value="Genomic_DNA"/>
</dbReference>
<dbReference type="RefSeq" id="WP_011387376.1">
    <property type="nucleotide sequence ID" value="NC_007633.1"/>
</dbReference>
<dbReference type="SMR" id="Q2SRY5"/>
<dbReference type="GeneID" id="42529612"/>
<dbReference type="KEGG" id="mcp:MCAP_0505"/>
<dbReference type="HOGENOM" id="CLU_015515_2_0_14"/>
<dbReference type="PhylomeDB" id="Q2SRY5"/>
<dbReference type="Proteomes" id="UP000001928">
    <property type="component" value="Chromosome"/>
</dbReference>
<dbReference type="GO" id="GO:0005737">
    <property type="term" value="C:cytoplasm"/>
    <property type="evidence" value="ECO:0007669"/>
    <property type="project" value="UniProtKB-SubCell"/>
</dbReference>
<dbReference type="GO" id="GO:0005524">
    <property type="term" value="F:ATP binding"/>
    <property type="evidence" value="ECO:0007669"/>
    <property type="project" value="UniProtKB-UniRule"/>
</dbReference>
<dbReference type="GO" id="GO:0004820">
    <property type="term" value="F:glycine-tRNA ligase activity"/>
    <property type="evidence" value="ECO:0000250"/>
    <property type="project" value="UniProtKB"/>
</dbReference>
<dbReference type="GO" id="GO:0046983">
    <property type="term" value="F:protein dimerization activity"/>
    <property type="evidence" value="ECO:0000250"/>
    <property type="project" value="UniProtKB"/>
</dbReference>
<dbReference type="GO" id="GO:0006426">
    <property type="term" value="P:glycyl-tRNA aminoacylation"/>
    <property type="evidence" value="ECO:0007669"/>
    <property type="project" value="UniProtKB-UniRule"/>
</dbReference>
<dbReference type="CDD" id="cd00774">
    <property type="entry name" value="GlyRS-like_core"/>
    <property type="match status" value="1"/>
</dbReference>
<dbReference type="FunFam" id="3.40.50.800:FF:000002">
    <property type="entry name" value="Glycine--tRNA ligase"/>
    <property type="match status" value="1"/>
</dbReference>
<dbReference type="Gene3D" id="3.40.50.800">
    <property type="entry name" value="Anticodon-binding domain"/>
    <property type="match status" value="1"/>
</dbReference>
<dbReference type="Gene3D" id="3.30.930.10">
    <property type="entry name" value="Bira Bifunctional Protein, Domain 2"/>
    <property type="match status" value="1"/>
</dbReference>
<dbReference type="HAMAP" id="MF_00253_B">
    <property type="entry name" value="Gly_tRNA_synth_B"/>
    <property type="match status" value="1"/>
</dbReference>
<dbReference type="InterPro" id="IPR002314">
    <property type="entry name" value="aa-tRNA-synt_IIb"/>
</dbReference>
<dbReference type="InterPro" id="IPR006195">
    <property type="entry name" value="aa-tRNA-synth_II"/>
</dbReference>
<dbReference type="InterPro" id="IPR045864">
    <property type="entry name" value="aa-tRNA-synth_II/BPL/LPL"/>
</dbReference>
<dbReference type="InterPro" id="IPR004154">
    <property type="entry name" value="Anticodon-bd"/>
</dbReference>
<dbReference type="InterPro" id="IPR036621">
    <property type="entry name" value="Anticodon-bd_dom_sf"/>
</dbReference>
<dbReference type="InterPro" id="IPR027031">
    <property type="entry name" value="Gly-tRNA_synthase/POLG2"/>
</dbReference>
<dbReference type="InterPro" id="IPR022961">
    <property type="entry name" value="Gly_tRNA_ligase_bac"/>
</dbReference>
<dbReference type="InterPro" id="IPR033731">
    <property type="entry name" value="GlyRS-like_core"/>
</dbReference>
<dbReference type="InterPro" id="IPR002315">
    <property type="entry name" value="tRNA-synt_gly"/>
</dbReference>
<dbReference type="NCBIfam" id="TIGR00389">
    <property type="entry name" value="glyS_dimeric"/>
    <property type="match status" value="1"/>
</dbReference>
<dbReference type="NCBIfam" id="NF003211">
    <property type="entry name" value="PRK04173.1"/>
    <property type="match status" value="1"/>
</dbReference>
<dbReference type="PANTHER" id="PTHR10745:SF8">
    <property type="entry name" value="DNA POLYMERASE SUBUNIT GAMMA-2, MITOCHONDRIAL"/>
    <property type="match status" value="1"/>
</dbReference>
<dbReference type="PANTHER" id="PTHR10745">
    <property type="entry name" value="GLYCYL-TRNA SYNTHETASE/DNA POLYMERASE SUBUNIT GAMMA-2"/>
    <property type="match status" value="1"/>
</dbReference>
<dbReference type="Pfam" id="PF03129">
    <property type="entry name" value="HGTP_anticodon"/>
    <property type="match status" value="1"/>
</dbReference>
<dbReference type="Pfam" id="PF00587">
    <property type="entry name" value="tRNA-synt_2b"/>
    <property type="match status" value="1"/>
</dbReference>
<dbReference type="PRINTS" id="PR01043">
    <property type="entry name" value="TRNASYNTHGLY"/>
</dbReference>
<dbReference type="SUPFAM" id="SSF52954">
    <property type="entry name" value="Class II aaRS ABD-related"/>
    <property type="match status" value="1"/>
</dbReference>
<dbReference type="SUPFAM" id="SSF55681">
    <property type="entry name" value="Class II aaRS and biotin synthetases"/>
    <property type="match status" value="1"/>
</dbReference>
<dbReference type="PROSITE" id="PS50862">
    <property type="entry name" value="AA_TRNA_LIGASE_II"/>
    <property type="match status" value="1"/>
</dbReference>
<organism>
    <name type="scientific">Mycoplasma capricolum subsp. capricolum (strain California kid / ATCC 27343 / NCTC 10154)</name>
    <dbReference type="NCBI Taxonomy" id="340047"/>
    <lineage>
        <taxon>Bacteria</taxon>
        <taxon>Bacillati</taxon>
        <taxon>Mycoplasmatota</taxon>
        <taxon>Mollicutes</taxon>
        <taxon>Mycoplasmataceae</taxon>
        <taxon>Mycoplasma</taxon>
    </lineage>
</organism>